<name>KDGT_BACSU</name>
<feature type="chain" id="PRO_0000209674" description="2-keto-3-deoxygluconate permease">
    <location>
        <begin position="1"/>
        <end position="330"/>
    </location>
</feature>
<feature type="transmembrane region" description="Helical" evidence="1">
    <location>
        <begin position="10"/>
        <end position="30"/>
    </location>
</feature>
<feature type="transmembrane region" description="Helical" evidence="1">
    <location>
        <begin position="42"/>
        <end position="62"/>
    </location>
</feature>
<feature type="transmembrane region" description="Helical" evidence="1">
    <location>
        <begin position="77"/>
        <end position="97"/>
    </location>
</feature>
<feature type="transmembrane region" description="Helical" evidence="1">
    <location>
        <begin position="100"/>
        <end position="120"/>
    </location>
</feature>
<feature type="transmembrane region" description="Helical" evidence="1">
    <location>
        <begin position="140"/>
        <end position="160"/>
    </location>
</feature>
<feature type="transmembrane region" description="Helical" evidence="1">
    <location>
        <begin position="163"/>
        <end position="183"/>
    </location>
</feature>
<feature type="transmembrane region" description="Helical" evidence="1">
    <location>
        <begin position="200"/>
        <end position="220"/>
    </location>
</feature>
<feature type="transmembrane region" description="Helical" evidence="1">
    <location>
        <begin position="224"/>
        <end position="244"/>
    </location>
</feature>
<feature type="transmembrane region" description="Helical" evidence="1">
    <location>
        <begin position="254"/>
        <end position="274"/>
    </location>
</feature>
<feature type="transmembrane region" description="Helical" evidence="1">
    <location>
        <begin position="289"/>
        <end position="309"/>
    </location>
</feature>
<comment type="function">
    <text evidence="1">Catalyzes the proton-dependent uptake of 2-keto-3-deoxygluconate (KDG) into the cell.</text>
</comment>
<comment type="catalytic activity">
    <reaction evidence="1">
        <text>2-dehydro-3-deoxy-D-gluconate(in) + H(+)(in) = 2-dehydro-3-deoxy-D-gluconate(out) + H(+)(out)</text>
        <dbReference type="Rhea" id="RHEA:29943"/>
        <dbReference type="ChEBI" id="CHEBI:15378"/>
        <dbReference type="ChEBI" id="CHEBI:57990"/>
    </reaction>
    <physiologicalReaction direction="right-to-left" evidence="1">
        <dbReference type="Rhea" id="RHEA:29945"/>
    </physiologicalReaction>
</comment>
<comment type="subcellular location">
    <subcellularLocation>
        <location evidence="1">Cell membrane</location>
        <topology evidence="1">Multi-pass membrane protein</topology>
    </subcellularLocation>
</comment>
<comment type="induction">
    <text evidence="2">Induced by galacturonate and negatively regulated by the KdgR repressor. Is subject to catabolite repression by glucose involving the ccpA gene.</text>
</comment>
<comment type="similarity">
    <text evidence="1 3">Belongs to the KdgT transporter family.</text>
</comment>
<evidence type="ECO:0000255" key="1">
    <source>
        <dbReference type="HAMAP-Rule" id="MF_00070"/>
    </source>
</evidence>
<evidence type="ECO:0000269" key="2">
    <source>
    </source>
</evidence>
<evidence type="ECO:0000305" key="3"/>
<organism>
    <name type="scientific">Bacillus subtilis (strain 168)</name>
    <dbReference type="NCBI Taxonomy" id="224308"/>
    <lineage>
        <taxon>Bacteria</taxon>
        <taxon>Bacillati</taxon>
        <taxon>Bacillota</taxon>
        <taxon>Bacilli</taxon>
        <taxon>Bacillales</taxon>
        <taxon>Bacillaceae</taxon>
        <taxon>Bacillus</taxon>
    </lineage>
</organism>
<reference key="1">
    <citation type="journal article" date="1996" name="Microbiology">
        <title>Sequence analysis of the Bacillus subtilis chromosome region between the serA and kdg loci cloned in a yeast artificial chromosome.</title>
        <authorList>
            <person name="Sorokin A.V."/>
            <person name="Azevedo V."/>
            <person name="Zumstein E."/>
            <person name="Galleron N."/>
            <person name="Ehrlich S.D."/>
            <person name="Serror P."/>
        </authorList>
    </citation>
    <scope>NUCLEOTIDE SEQUENCE [GENOMIC DNA]</scope>
    <source>
        <strain>168 / Marburg / ATCC 6051 / DSM 10 / JCM 1465 / NBRC 13719 / NCIMB 3610 / NRRL NRS-744 / VKM B-501</strain>
    </source>
</reference>
<reference key="2">
    <citation type="journal article" date="1997" name="Nature">
        <title>The complete genome sequence of the Gram-positive bacterium Bacillus subtilis.</title>
        <authorList>
            <person name="Kunst F."/>
            <person name="Ogasawara N."/>
            <person name="Moszer I."/>
            <person name="Albertini A.M."/>
            <person name="Alloni G."/>
            <person name="Azevedo V."/>
            <person name="Bertero M.G."/>
            <person name="Bessieres P."/>
            <person name="Bolotin A."/>
            <person name="Borchert S."/>
            <person name="Borriss R."/>
            <person name="Boursier L."/>
            <person name="Brans A."/>
            <person name="Braun M."/>
            <person name="Brignell S.C."/>
            <person name="Bron S."/>
            <person name="Brouillet S."/>
            <person name="Bruschi C.V."/>
            <person name="Caldwell B."/>
            <person name="Capuano V."/>
            <person name="Carter N.M."/>
            <person name="Choi S.-K."/>
            <person name="Codani J.-J."/>
            <person name="Connerton I.F."/>
            <person name="Cummings N.J."/>
            <person name="Daniel R.A."/>
            <person name="Denizot F."/>
            <person name="Devine K.M."/>
            <person name="Duesterhoeft A."/>
            <person name="Ehrlich S.D."/>
            <person name="Emmerson P.T."/>
            <person name="Entian K.-D."/>
            <person name="Errington J."/>
            <person name="Fabret C."/>
            <person name="Ferrari E."/>
            <person name="Foulger D."/>
            <person name="Fritz C."/>
            <person name="Fujita M."/>
            <person name="Fujita Y."/>
            <person name="Fuma S."/>
            <person name="Galizzi A."/>
            <person name="Galleron N."/>
            <person name="Ghim S.-Y."/>
            <person name="Glaser P."/>
            <person name="Goffeau A."/>
            <person name="Golightly E.J."/>
            <person name="Grandi G."/>
            <person name="Guiseppi G."/>
            <person name="Guy B.J."/>
            <person name="Haga K."/>
            <person name="Haiech J."/>
            <person name="Harwood C.R."/>
            <person name="Henaut A."/>
            <person name="Hilbert H."/>
            <person name="Holsappel S."/>
            <person name="Hosono S."/>
            <person name="Hullo M.-F."/>
            <person name="Itaya M."/>
            <person name="Jones L.-M."/>
            <person name="Joris B."/>
            <person name="Karamata D."/>
            <person name="Kasahara Y."/>
            <person name="Klaerr-Blanchard M."/>
            <person name="Klein C."/>
            <person name="Kobayashi Y."/>
            <person name="Koetter P."/>
            <person name="Koningstein G."/>
            <person name="Krogh S."/>
            <person name="Kumano M."/>
            <person name="Kurita K."/>
            <person name="Lapidus A."/>
            <person name="Lardinois S."/>
            <person name="Lauber J."/>
            <person name="Lazarevic V."/>
            <person name="Lee S.-M."/>
            <person name="Levine A."/>
            <person name="Liu H."/>
            <person name="Masuda S."/>
            <person name="Mauel C."/>
            <person name="Medigue C."/>
            <person name="Medina N."/>
            <person name="Mellado R.P."/>
            <person name="Mizuno M."/>
            <person name="Moestl D."/>
            <person name="Nakai S."/>
            <person name="Noback M."/>
            <person name="Noone D."/>
            <person name="O'Reilly M."/>
            <person name="Ogawa K."/>
            <person name="Ogiwara A."/>
            <person name="Oudega B."/>
            <person name="Park S.-H."/>
            <person name="Parro V."/>
            <person name="Pohl T.M."/>
            <person name="Portetelle D."/>
            <person name="Porwollik S."/>
            <person name="Prescott A.M."/>
            <person name="Presecan E."/>
            <person name="Pujic P."/>
            <person name="Purnelle B."/>
            <person name="Rapoport G."/>
            <person name="Rey M."/>
            <person name="Reynolds S."/>
            <person name="Rieger M."/>
            <person name="Rivolta C."/>
            <person name="Rocha E."/>
            <person name="Roche B."/>
            <person name="Rose M."/>
            <person name="Sadaie Y."/>
            <person name="Sato T."/>
            <person name="Scanlan E."/>
            <person name="Schleich S."/>
            <person name="Schroeter R."/>
            <person name="Scoffone F."/>
            <person name="Sekiguchi J."/>
            <person name="Sekowska A."/>
            <person name="Seror S.J."/>
            <person name="Serror P."/>
            <person name="Shin B.-S."/>
            <person name="Soldo B."/>
            <person name="Sorokin A."/>
            <person name="Tacconi E."/>
            <person name="Takagi T."/>
            <person name="Takahashi H."/>
            <person name="Takemaru K."/>
            <person name="Takeuchi M."/>
            <person name="Tamakoshi A."/>
            <person name="Tanaka T."/>
            <person name="Terpstra P."/>
            <person name="Tognoni A."/>
            <person name="Tosato V."/>
            <person name="Uchiyama S."/>
            <person name="Vandenbol M."/>
            <person name="Vannier F."/>
            <person name="Vassarotti A."/>
            <person name="Viari A."/>
            <person name="Wambutt R."/>
            <person name="Wedler E."/>
            <person name="Wedler H."/>
            <person name="Weitzenegger T."/>
            <person name="Winters P."/>
            <person name="Wipat A."/>
            <person name="Yamamoto H."/>
            <person name="Yamane K."/>
            <person name="Yasumoto K."/>
            <person name="Yata K."/>
            <person name="Yoshida K."/>
            <person name="Yoshikawa H.-F."/>
            <person name="Zumstein E."/>
            <person name="Yoshikawa H."/>
            <person name="Danchin A."/>
        </authorList>
    </citation>
    <scope>NUCLEOTIDE SEQUENCE [LARGE SCALE GENOMIC DNA]</scope>
    <source>
        <strain>168</strain>
    </source>
</reference>
<reference key="3">
    <citation type="journal article" date="1998" name="Microbiology">
        <title>The kdgRKAT operon of Bacillus subtilis: detection of the transcript and regulation by the kdgR and ccpA genes.</title>
        <authorList>
            <person name="Pujic P."/>
            <person name="Dervyn R."/>
            <person name="Sorokin A."/>
            <person name="Ehrlich S.D."/>
        </authorList>
    </citation>
    <scope>INDUCTION</scope>
    <source>
        <strain>168</strain>
    </source>
</reference>
<dbReference type="EMBL" id="L47838">
    <property type="protein sequence ID" value="AAB38481.1"/>
    <property type="molecule type" value="Genomic_DNA"/>
</dbReference>
<dbReference type="EMBL" id="AL009126">
    <property type="protein sequence ID" value="CAB14126.1"/>
    <property type="molecule type" value="Genomic_DNA"/>
</dbReference>
<dbReference type="PIR" id="C69648">
    <property type="entry name" value="C69648"/>
</dbReference>
<dbReference type="RefSeq" id="NP_390091.1">
    <property type="nucleotide sequence ID" value="NC_000964.3"/>
</dbReference>
<dbReference type="RefSeq" id="WP_003230734.1">
    <property type="nucleotide sequence ID" value="NZ_OZ025638.1"/>
</dbReference>
<dbReference type="FunCoup" id="P50847">
    <property type="interactions" value="21"/>
</dbReference>
<dbReference type="STRING" id="224308.BSU22090"/>
<dbReference type="TCDB" id="2.A.10.1.3">
    <property type="family name" value="the 2-keto-3-deoxygluconate transporter (kdgt) family"/>
</dbReference>
<dbReference type="PaxDb" id="224308-BSU22090"/>
<dbReference type="EnsemblBacteria" id="CAB14126">
    <property type="protein sequence ID" value="CAB14126"/>
    <property type="gene ID" value="BSU_22090"/>
</dbReference>
<dbReference type="GeneID" id="939065"/>
<dbReference type="KEGG" id="bsu:BSU22090"/>
<dbReference type="PATRIC" id="fig|224308.179.peg.2413"/>
<dbReference type="eggNOG" id="ENOG502Z7JT">
    <property type="taxonomic scope" value="Bacteria"/>
</dbReference>
<dbReference type="InParanoid" id="P50847"/>
<dbReference type="OrthoDB" id="2833at2"/>
<dbReference type="PhylomeDB" id="P50847"/>
<dbReference type="BioCyc" id="BSUB:BSU22090-MONOMER"/>
<dbReference type="Proteomes" id="UP000001570">
    <property type="component" value="Chromosome"/>
</dbReference>
<dbReference type="GO" id="GO:0005886">
    <property type="term" value="C:plasma membrane"/>
    <property type="evidence" value="ECO:0007669"/>
    <property type="project" value="UniProtKB-SubCell"/>
</dbReference>
<dbReference type="GO" id="GO:0015649">
    <property type="term" value="F:2-keto-3-deoxygluconate:proton symporter activity"/>
    <property type="evidence" value="ECO:0007669"/>
    <property type="project" value="UniProtKB-UniRule"/>
</dbReference>
<dbReference type="HAMAP" id="MF_00070">
    <property type="entry name" value="KdgT"/>
    <property type="match status" value="1"/>
</dbReference>
<dbReference type="InterPro" id="IPR004684">
    <property type="entry name" value="2keto-3dGluconate_permease"/>
</dbReference>
<dbReference type="InterPro" id="IPR018395">
    <property type="entry name" value="2keto-3dGluconate_permease_sub"/>
</dbReference>
<dbReference type="NCBIfam" id="TIGR00793">
    <property type="entry name" value="kdgT"/>
    <property type="match status" value="1"/>
</dbReference>
<dbReference type="Pfam" id="PF03812">
    <property type="entry name" value="KdgT"/>
    <property type="match status" value="1"/>
</dbReference>
<gene>
    <name evidence="1" type="primary">kdgT</name>
    <name type="ordered locus">BSU22090</name>
</gene>
<accession>P50847</accession>
<sequence>MKIKATIERVPGGMMIIPLFLGAALNTFAPGTAEFFGGFTGALITGTLPILGVFIFCVGATIDFRSSGYIARKGITLLLGKIGFAALLGVIAAQFIPDDGIQSGFFAGLSVLAIVAVMNETNGGLYLALMNHMGRKEDAGAFAFISTESGPFMTMVTFGVTGLAAFPWETLAATVIPFLLGCILGNLDHDLRDLFSKVVPAIIPFFAFSLGNTLNFGMLIQSGLLGIFIGVSVVILSGSSLFLLDRFIARGDGVAGVAASSTAGAAVAVPYALAEANASFAPVAESATAIIATSVIVTSLLTPLATVWVDKKIKQKKRRTPPPKNQMTIN</sequence>
<proteinExistence type="evidence at transcript level"/>
<protein>
    <recommendedName>
        <fullName evidence="1">2-keto-3-deoxygluconate permease</fullName>
        <shortName evidence="1">KDG permease</shortName>
    </recommendedName>
</protein>
<keyword id="KW-1003">Cell membrane</keyword>
<keyword id="KW-0472">Membrane</keyword>
<keyword id="KW-1185">Reference proteome</keyword>
<keyword id="KW-0762">Sugar transport</keyword>
<keyword id="KW-0769">Symport</keyword>
<keyword id="KW-0812">Transmembrane</keyword>
<keyword id="KW-1133">Transmembrane helix</keyword>
<keyword id="KW-0813">Transport</keyword>